<protein>
    <recommendedName>
        <fullName evidence="2">Glutathione synthetase</fullName>
        <ecNumber evidence="2">6.3.2.3</ecNumber>
    </recommendedName>
    <alternativeName>
        <fullName evidence="2">GSH synthetase</fullName>
        <shortName evidence="2">GSH-S</shortName>
        <shortName evidence="2">GSHase</shortName>
    </alternativeName>
    <alternativeName>
        <fullName evidence="2">Glutathione synthase</fullName>
    </alternativeName>
</protein>
<sequence length="320" mass="37022">MSKKISLKIGILMDSIESINIKKDSSFAILLEAQKRNHIIHYMEMNDLYLRKEQAFARTRLIKLIKNTQKWYQFIKQQSISLSELDVILMRKDPPFNTEFIYSTYILERAEETGVLIINKPKSLRDCNEKIFTSWFPDLITDTLVTRNIFQIRQFWEKYQDIIIKPLDAMGGANIFRIKKNDPNFSVIVENMTNYERKYCMVQNYLPEIKLGDKRILIINGKPIPWCVARIARIGETRANLAAGGEGKIQSLSETDWKIANYLSPTLKKRGLILVGLDVIGDKLTEINVTSPTCICEIESQKNISITGMLLDYIEKKVCL</sequence>
<dbReference type="EC" id="6.3.2.3" evidence="2"/>
<dbReference type="EMBL" id="BA000003">
    <property type="protein sequence ID" value="BAB13239.1"/>
    <property type="molecule type" value="Genomic_DNA"/>
</dbReference>
<dbReference type="RefSeq" id="NP_240353.1">
    <property type="nucleotide sequence ID" value="NC_002528.1"/>
</dbReference>
<dbReference type="RefSeq" id="WP_010896158.1">
    <property type="nucleotide sequence ID" value="NC_002528.1"/>
</dbReference>
<dbReference type="SMR" id="P57612"/>
<dbReference type="STRING" id="563178.BUAP5A_540"/>
<dbReference type="EnsemblBacteria" id="BAB13239">
    <property type="protein sequence ID" value="BAB13239"/>
    <property type="gene ID" value="BAB13239"/>
</dbReference>
<dbReference type="KEGG" id="buc:BU547"/>
<dbReference type="PATRIC" id="fig|107806.10.peg.551"/>
<dbReference type="eggNOG" id="COG0189">
    <property type="taxonomic scope" value="Bacteria"/>
</dbReference>
<dbReference type="HOGENOM" id="CLU_068239_0_0_6"/>
<dbReference type="UniPathway" id="UPA00142">
    <property type="reaction ID" value="UER00210"/>
</dbReference>
<dbReference type="Proteomes" id="UP000001806">
    <property type="component" value="Chromosome"/>
</dbReference>
<dbReference type="GO" id="GO:0005737">
    <property type="term" value="C:cytoplasm"/>
    <property type="evidence" value="ECO:0007669"/>
    <property type="project" value="TreeGrafter"/>
</dbReference>
<dbReference type="GO" id="GO:0005524">
    <property type="term" value="F:ATP binding"/>
    <property type="evidence" value="ECO:0007669"/>
    <property type="project" value="UniProtKB-UniRule"/>
</dbReference>
<dbReference type="GO" id="GO:0004363">
    <property type="term" value="F:glutathione synthase activity"/>
    <property type="evidence" value="ECO:0007669"/>
    <property type="project" value="UniProtKB-UniRule"/>
</dbReference>
<dbReference type="GO" id="GO:0046872">
    <property type="term" value="F:metal ion binding"/>
    <property type="evidence" value="ECO:0007669"/>
    <property type="project" value="UniProtKB-KW"/>
</dbReference>
<dbReference type="FunFam" id="3.30.1490.20:FF:000009">
    <property type="entry name" value="Glutathione synthetase"/>
    <property type="match status" value="1"/>
</dbReference>
<dbReference type="FunFam" id="3.40.50.20:FF:000009">
    <property type="entry name" value="Glutathione synthetase"/>
    <property type="match status" value="1"/>
</dbReference>
<dbReference type="Gene3D" id="3.40.50.20">
    <property type="match status" value="1"/>
</dbReference>
<dbReference type="Gene3D" id="3.30.1490.20">
    <property type="entry name" value="ATP-grasp fold, A domain"/>
    <property type="match status" value="1"/>
</dbReference>
<dbReference type="Gene3D" id="3.30.470.20">
    <property type="entry name" value="ATP-grasp fold, B domain"/>
    <property type="match status" value="1"/>
</dbReference>
<dbReference type="HAMAP" id="MF_00162">
    <property type="entry name" value="GSH_S"/>
    <property type="match status" value="1"/>
</dbReference>
<dbReference type="InterPro" id="IPR011761">
    <property type="entry name" value="ATP-grasp"/>
</dbReference>
<dbReference type="InterPro" id="IPR013815">
    <property type="entry name" value="ATP_grasp_subdomain_1"/>
</dbReference>
<dbReference type="InterPro" id="IPR006284">
    <property type="entry name" value="Glut_synth_pro"/>
</dbReference>
<dbReference type="InterPro" id="IPR004218">
    <property type="entry name" value="GSHS_ATP-bd"/>
</dbReference>
<dbReference type="InterPro" id="IPR004215">
    <property type="entry name" value="GSHS_N"/>
</dbReference>
<dbReference type="InterPro" id="IPR016185">
    <property type="entry name" value="PreATP-grasp_dom_sf"/>
</dbReference>
<dbReference type="NCBIfam" id="TIGR01380">
    <property type="entry name" value="glut_syn"/>
    <property type="match status" value="1"/>
</dbReference>
<dbReference type="NCBIfam" id="NF003573">
    <property type="entry name" value="PRK05246.1"/>
    <property type="match status" value="1"/>
</dbReference>
<dbReference type="PANTHER" id="PTHR21621:SF4">
    <property type="entry name" value="GLUTATHIONE SYNTHETASE"/>
    <property type="match status" value="1"/>
</dbReference>
<dbReference type="PANTHER" id="PTHR21621">
    <property type="entry name" value="RIBOSOMAL PROTEIN S6 MODIFICATION PROTEIN"/>
    <property type="match status" value="1"/>
</dbReference>
<dbReference type="Pfam" id="PF02955">
    <property type="entry name" value="GSH-S_ATP"/>
    <property type="match status" value="1"/>
</dbReference>
<dbReference type="Pfam" id="PF02951">
    <property type="entry name" value="GSH-S_N"/>
    <property type="match status" value="1"/>
</dbReference>
<dbReference type="SUPFAM" id="SSF56059">
    <property type="entry name" value="Glutathione synthetase ATP-binding domain-like"/>
    <property type="match status" value="1"/>
</dbReference>
<dbReference type="SUPFAM" id="SSF52440">
    <property type="entry name" value="PreATP-grasp domain"/>
    <property type="match status" value="1"/>
</dbReference>
<dbReference type="PROSITE" id="PS50975">
    <property type="entry name" value="ATP_GRASP"/>
    <property type="match status" value="1"/>
</dbReference>
<keyword id="KW-0067">ATP-binding</keyword>
<keyword id="KW-0317">Glutathione biosynthesis</keyword>
<keyword id="KW-0436">Ligase</keyword>
<keyword id="KW-0460">Magnesium</keyword>
<keyword id="KW-0464">Manganese</keyword>
<keyword id="KW-0479">Metal-binding</keyword>
<keyword id="KW-0547">Nucleotide-binding</keyword>
<keyword id="KW-1185">Reference proteome</keyword>
<organism>
    <name type="scientific">Buchnera aphidicola subsp. Acyrthosiphon pisum (strain APS)</name>
    <name type="common">Acyrthosiphon pisum symbiotic bacterium</name>
    <dbReference type="NCBI Taxonomy" id="107806"/>
    <lineage>
        <taxon>Bacteria</taxon>
        <taxon>Pseudomonadati</taxon>
        <taxon>Pseudomonadota</taxon>
        <taxon>Gammaproteobacteria</taxon>
        <taxon>Enterobacterales</taxon>
        <taxon>Erwiniaceae</taxon>
        <taxon>Buchnera</taxon>
    </lineage>
</organism>
<proteinExistence type="inferred from homology"/>
<comment type="catalytic activity">
    <reaction evidence="2">
        <text>gamma-L-glutamyl-L-cysteine + glycine + ATP = glutathione + ADP + phosphate + H(+)</text>
        <dbReference type="Rhea" id="RHEA:13557"/>
        <dbReference type="ChEBI" id="CHEBI:15378"/>
        <dbReference type="ChEBI" id="CHEBI:30616"/>
        <dbReference type="ChEBI" id="CHEBI:43474"/>
        <dbReference type="ChEBI" id="CHEBI:57305"/>
        <dbReference type="ChEBI" id="CHEBI:57925"/>
        <dbReference type="ChEBI" id="CHEBI:58173"/>
        <dbReference type="ChEBI" id="CHEBI:456216"/>
        <dbReference type="EC" id="6.3.2.3"/>
    </reaction>
</comment>
<comment type="cofactor">
    <cofactor evidence="1">
        <name>Mg(2+)</name>
        <dbReference type="ChEBI" id="CHEBI:18420"/>
    </cofactor>
    <cofactor evidence="1">
        <name>Mn(2+)</name>
        <dbReference type="ChEBI" id="CHEBI:29035"/>
    </cofactor>
    <text evidence="1">Binds 1 Mg(2+) or Mn(2+) ion per subunit.</text>
</comment>
<comment type="pathway">
    <text evidence="2">Sulfur metabolism; glutathione biosynthesis; glutathione from L-cysteine and L-glutamate: step 2/2.</text>
</comment>
<comment type="similarity">
    <text evidence="2">Belongs to the prokaryotic GSH synthase family.</text>
</comment>
<accession>P57612</accession>
<feature type="chain" id="PRO_0000197459" description="Glutathione synthetase">
    <location>
        <begin position="1"/>
        <end position="320"/>
    </location>
</feature>
<feature type="domain" description="ATP-grasp" evidence="2">
    <location>
        <begin position="130"/>
        <end position="315"/>
    </location>
</feature>
<feature type="binding site" evidence="2">
    <location>
        <begin position="156"/>
        <end position="212"/>
    </location>
    <ligand>
        <name>ATP</name>
        <dbReference type="ChEBI" id="CHEBI:30616"/>
    </ligand>
</feature>
<feature type="binding site" evidence="2">
    <location>
        <position position="286"/>
    </location>
    <ligand>
        <name>Mg(2+)</name>
        <dbReference type="ChEBI" id="CHEBI:18420"/>
    </ligand>
</feature>
<feature type="binding site" evidence="2">
    <location>
        <position position="288"/>
    </location>
    <ligand>
        <name>Mg(2+)</name>
        <dbReference type="ChEBI" id="CHEBI:18420"/>
    </ligand>
</feature>
<name>GSHB_BUCAI</name>
<evidence type="ECO:0000250" key="1"/>
<evidence type="ECO:0000255" key="2">
    <source>
        <dbReference type="HAMAP-Rule" id="MF_00162"/>
    </source>
</evidence>
<reference key="1">
    <citation type="journal article" date="2000" name="Nature">
        <title>Genome sequence of the endocellular bacterial symbiont of aphids Buchnera sp. APS.</title>
        <authorList>
            <person name="Shigenobu S."/>
            <person name="Watanabe H."/>
            <person name="Hattori M."/>
            <person name="Sakaki Y."/>
            <person name="Ishikawa H."/>
        </authorList>
    </citation>
    <scope>NUCLEOTIDE SEQUENCE [LARGE SCALE GENOMIC DNA]</scope>
    <source>
        <strain>APS</strain>
    </source>
</reference>
<gene>
    <name evidence="2" type="primary">gshB</name>
    <name type="ordered locus">BU547</name>
</gene>